<sequence>MPYPKKVTIKEVGPRDGLQNEPVWIATEDKITWINQLSRTGLSYIEITSFVHPKWIPALRDAIDVAKGIDREKGVTYAALVPNQRGLENALEGGINEACVFMSASETHNRKNINKSTSESLHILKQVNNDAQKANLTTRAYLSTVFGCPYEKDVPIEQVIRLSEALFEFGISELSLGDTIGAANPAQVETVLEALLARFPANQIALHFHDTRGTALANMVTALQMGITVFDGSAGGLGGCPYAPGSSGNAATEDIVYMLEQMDIKTNVKLEKLLSAAKWIEEKMGKPLPSRNLQVFKSS</sequence>
<keyword id="KW-0002">3D-structure</keyword>
<keyword id="KW-0456">Lyase</keyword>
<keyword id="KW-0479">Metal-binding</keyword>
<keyword id="KW-1185">Reference proteome</keyword>
<name>HMGCL_BACSU</name>
<dbReference type="EC" id="4.1.3.4"/>
<dbReference type="EMBL" id="Y13917">
    <property type="protein sequence ID" value="CAA74217.1"/>
    <property type="molecule type" value="Genomic_DNA"/>
</dbReference>
<dbReference type="EMBL" id="AL009126">
    <property type="protein sequence ID" value="CAB13706.1"/>
    <property type="molecule type" value="Genomic_DNA"/>
</dbReference>
<dbReference type="PIR" id="D69893">
    <property type="entry name" value="D69893"/>
</dbReference>
<dbReference type="PDB" id="1YDO">
    <property type="method" value="X-ray"/>
    <property type="resolution" value="2.71 A"/>
    <property type="chains" value="A/B/C/D=1-299"/>
</dbReference>
<dbReference type="PDBsum" id="1YDO"/>
<dbReference type="SMR" id="O34873"/>
<dbReference type="FunCoup" id="O34873">
    <property type="interactions" value="540"/>
</dbReference>
<dbReference type="STRING" id="224308.BSU18230"/>
<dbReference type="PaxDb" id="224308-BSU18230"/>
<dbReference type="EnsemblBacteria" id="CAB13706">
    <property type="protein sequence ID" value="CAB13706"/>
    <property type="gene ID" value="BSU_18230"/>
</dbReference>
<dbReference type="GeneID" id="939515"/>
<dbReference type="KEGG" id="bsu:BSU18230"/>
<dbReference type="PATRIC" id="fig|224308.179.peg.1988"/>
<dbReference type="eggNOG" id="COG0119">
    <property type="taxonomic scope" value="Bacteria"/>
</dbReference>
<dbReference type="InParanoid" id="O34873"/>
<dbReference type="OrthoDB" id="9784013at2"/>
<dbReference type="PhylomeDB" id="O34873"/>
<dbReference type="BioCyc" id="BSUB:BSU18230-MONOMER"/>
<dbReference type="BRENDA" id="4.1.3.4">
    <property type="organism ID" value="658"/>
</dbReference>
<dbReference type="UniPathway" id="UPA00896">
    <property type="reaction ID" value="UER00863"/>
</dbReference>
<dbReference type="EvolutionaryTrace" id="O34873"/>
<dbReference type="Proteomes" id="UP000001570">
    <property type="component" value="Chromosome"/>
</dbReference>
<dbReference type="GO" id="GO:0004419">
    <property type="term" value="F:hydroxymethylglutaryl-CoA lyase activity"/>
    <property type="evidence" value="ECO:0000250"/>
    <property type="project" value="UniProtKB"/>
</dbReference>
<dbReference type="GO" id="GO:0046872">
    <property type="term" value="F:metal ion binding"/>
    <property type="evidence" value="ECO:0000250"/>
    <property type="project" value="UniProtKB"/>
</dbReference>
<dbReference type="GO" id="GO:0046951">
    <property type="term" value="P:ketone body biosynthetic process"/>
    <property type="evidence" value="ECO:0000318"/>
    <property type="project" value="GO_Central"/>
</dbReference>
<dbReference type="GO" id="GO:0006552">
    <property type="term" value="P:L-leucine catabolic process"/>
    <property type="evidence" value="ECO:0000318"/>
    <property type="project" value="GO_Central"/>
</dbReference>
<dbReference type="CDD" id="cd07938">
    <property type="entry name" value="DRE_TIM_HMGL"/>
    <property type="match status" value="1"/>
</dbReference>
<dbReference type="FunFam" id="3.20.20.70:FF:000071">
    <property type="entry name" value="Hydroxymethylglutaryl-CoA lyase"/>
    <property type="match status" value="1"/>
</dbReference>
<dbReference type="Gene3D" id="3.20.20.70">
    <property type="entry name" value="Aldolase class I"/>
    <property type="match status" value="1"/>
</dbReference>
<dbReference type="InterPro" id="IPR013785">
    <property type="entry name" value="Aldolase_TIM"/>
</dbReference>
<dbReference type="InterPro" id="IPR043594">
    <property type="entry name" value="HMGL"/>
</dbReference>
<dbReference type="InterPro" id="IPR000891">
    <property type="entry name" value="PYR_CT"/>
</dbReference>
<dbReference type="NCBIfam" id="NF004283">
    <property type="entry name" value="PRK05692.1"/>
    <property type="match status" value="1"/>
</dbReference>
<dbReference type="PANTHER" id="PTHR42738">
    <property type="entry name" value="HYDROXYMETHYLGLUTARYL-COA LYASE"/>
    <property type="match status" value="1"/>
</dbReference>
<dbReference type="PANTHER" id="PTHR42738:SF7">
    <property type="entry name" value="HYDROXYMETHYLGLUTARYL-COA LYASE"/>
    <property type="match status" value="1"/>
</dbReference>
<dbReference type="Pfam" id="PF00682">
    <property type="entry name" value="HMGL-like"/>
    <property type="match status" value="1"/>
</dbReference>
<dbReference type="SUPFAM" id="SSF51569">
    <property type="entry name" value="Aldolase"/>
    <property type="match status" value="1"/>
</dbReference>
<dbReference type="PROSITE" id="PS50991">
    <property type="entry name" value="PYR_CT"/>
    <property type="match status" value="1"/>
</dbReference>
<reference key="1">
    <citation type="journal article" date="1997" name="Microbiology">
        <title>Sequence completion, identification and definition of the fengycin operon in Bacillus subtilis 168.</title>
        <authorList>
            <person name="Tosato V."/>
            <person name="Albertini A.M."/>
            <person name="Zotti M."/>
            <person name="Sonda S."/>
            <person name="Bruschi C.V."/>
        </authorList>
    </citation>
    <scope>NUCLEOTIDE SEQUENCE [GENOMIC DNA]</scope>
    <source>
        <strain>168</strain>
    </source>
</reference>
<reference key="2">
    <citation type="journal article" date="1997" name="Nature">
        <title>The complete genome sequence of the Gram-positive bacterium Bacillus subtilis.</title>
        <authorList>
            <person name="Kunst F."/>
            <person name="Ogasawara N."/>
            <person name="Moszer I."/>
            <person name="Albertini A.M."/>
            <person name="Alloni G."/>
            <person name="Azevedo V."/>
            <person name="Bertero M.G."/>
            <person name="Bessieres P."/>
            <person name="Bolotin A."/>
            <person name="Borchert S."/>
            <person name="Borriss R."/>
            <person name="Boursier L."/>
            <person name="Brans A."/>
            <person name="Braun M."/>
            <person name="Brignell S.C."/>
            <person name="Bron S."/>
            <person name="Brouillet S."/>
            <person name="Bruschi C.V."/>
            <person name="Caldwell B."/>
            <person name="Capuano V."/>
            <person name="Carter N.M."/>
            <person name="Choi S.-K."/>
            <person name="Codani J.-J."/>
            <person name="Connerton I.F."/>
            <person name="Cummings N.J."/>
            <person name="Daniel R.A."/>
            <person name="Denizot F."/>
            <person name="Devine K.M."/>
            <person name="Duesterhoeft A."/>
            <person name="Ehrlich S.D."/>
            <person name="Emmerson P.T."/>
            <person name="Entian K.-D."/>
            <person name="Errington J."/>
            <person name="Fabret C."/>
            <person name="Ferrari E."/>
            <person name="Foulger D."/>
            <person name="Fritz C."/>
            <person name="Fujita M."/>
            <person name="Fujita Y."/>
            <person name="Fuma S."/>
            <person name="Galizzi A."/>
            <person name="Galleron N."/>
            <person name="Ghim S.-Y."/>
            <person name="Glaser P."/>
            <person name="Goffeau A."/>
            <person name="Golightly E.J."/>
            <person name="Grandi G."/>
            <person name="Guiseppi G."/>
            <person name="Guy B.J."/>
            <person name="Haga K."/>
            <person name="Haiech J."/>
            <person name="Harwood C.R."/>
            <person name="Henaut A."/>
            <person name="Hilbert H."/>
            <person name="Holsappel S."/>
            <person name="Hosono S."/>
            <person name="Hullo M.-F."/>
            <person name="Itaya M."/>
            <person name="Jones L.-M."/>
            <person name="Joris B."/>
            <person name="Karamata D."/>
            <person name="Kasahara Y."/>
            <person name="Klaerr-Blanchard M."/>
            <person name="Klein C."/>
            <person name="Kobayashi Y."/>
            <person name="Koetter P."/>
            <person name="Koningstein G."/>
            <person name="Krogh S."/>
            <person name="Kumano M."/>
            <person name="Kurita K."/>
            <person name="Lapidus A."/>
            <person name="Lardinois S."/>
            <person name="Lauber J."/>
            <person name="Lazarevic V."/>
            <person name="Lee S.-M."/>
            <person name="Levine A."/>
            <person name="Liu H."/>
            <person name="Masuda S."/>
            <person name="Mauel C."/>
            <person name="Medigue C."/>
            <person name="Medina N."/>
            <person name="Mellado R.P."/>
            <person name="Mizuno M."/>
            <person name="Moestl D."/>
            <person name="Nakai S."/>
            <person name="Noback M."/>
            <person name="Noone D."/>
            <person name="O'Reilly M."/>
            <person name="Ogawa K."/>
            <person name="Ogiwara A."/>
            <person name="Oudega B."/>
            <person name="Park S.-H."/>
            <person name="Parro V."/>
            <person name="Pohl T.M."/>
            <person name="Portetelle D."/>
            <person name="Porwollik S."/>
            <person name="Prescott A.M."/>
            <person name="Presecan E."/>
            <person name="Pujic P."/>
            <person name="Purnelle B."/>
            <person name="Rapoport G."/>
            <person name="Rey M."/>
            <person name="Reynolds S."/>
            <person name="Rieger M."/>
            <person name="Rivolta C."/>
            <person name="Rocha E."/>
            <person name="Roche B."/>
            <person name="Rose M."/>
            <person name="Sadaie Y."/>
            <person name="Sato T."/>
            <person name="Scanlan E."/>
            <person name="Schleich S."/>
            <person name="Schroeter R."/>
            <person name="Scoffone F."/>
            <person name="Sekiguchi J."/>
            <person name="Sekowska A."/>
            <person name="Seror S.J."/>
            <person name="Serror P."/>
            <person name="Shin B.-S."/>
            <person name="Soldo B."/>
            <person name="Sorokin A."/>
            <person name="Tacconi E."/>
            <person name="Takagi T."/>
            <person name="Takahashi H."/>
            <person name="Takemaru K."/>
            <person name="Takeuchi M."/>
            <person name="Tamakoshi A."/>
            <person name="Tanaka T."/>
            <person name="Terpstra P."/>
            <person name="Tognoni A."/>
            <person name="Tosato V."/>
            <person name="Uchiyama S."/>
            <person name="Vandenbol M."/>
            <person name="Vannier F."/>
            <person name="Vassarotti A."/>
            <person name="Viari A."/>
            <person name="Wambutt R."/>
            <person name="Wedler E."/>
            <person name="Wedler H."/>
            <person name="Weitzenegger T."/>
            <person name="Winters P."/>
            <person name="Wipat A."/>
            <person name="Yamamoto H."/>
            <person name="Yamane K."/>
            <person name="Yasumoto K."/>
            <person name="Yata K."/>
            <person name="Yoshida K."/>
            <person name="Yoshikawa H.-F."/>
            <person name="Zumstein E."/>
            <person name="Yoshikawa H."/>
            <person name="Danchin A."/>
        </authorList>
    </citation>
    <scope>NUCLEOTIDE SEQUENCE [LARGE SCALE GENOMIC DNA]</scope>
    <source>
        <strain>168</strain>
    </source>
</reference>
<reference key="3">
    <citation type="journal article" date="2006" name="J. Biol. Chem.">
        <title>Crystal structures of two bacterial 3-hydroxy-3-methylglutaryl-CoA lyases suggest a common catalytic mechanism among a family of TIM barrel metalloenzymes cleaving carbon-carbon bonds.</title>
        <authorList>
            <person name="Forouhar F."/>
            <person name="Hussain M."/>
            <person name="Farid R."/>
            <person name="Benach J."/>
            <person name="Abashidze M."/>
            <person name="Edstrom W.C."/>
            <person name="Vorobiev S.M."/>
            <person name="Xiao R."/>
            <person name="Acton T.B."/>
            <person name="Fu Z."/>
            <person name="Kim J.-J.P."/>
            <person name="Miziorko H.M."/>
            <person name="Montelione G.T."/>
            <person name="Hunt J.F."/>
        </authorList>
    </citation>
    <scope>X-RAY CRYSTALLOGRAPHY (2.71 ANGSTROMS)</scope>
    <scope>SUBUNIT</scope>
</reference>
<evidence type="ECO:0000250" key="1"/>
<evidence type="ECO:0000255" key="2">
    <source>
        <dbReference type="PROSITE-ProRule" id="PRU01151"/>
    </source>
</evidence>
<evidence type="ECO:0000269" key="3">
    <source>
    </source>
</evidence>
<evidence type="ECO:0000305" key="4"/>
<evidence type="ECO:0007829" key="5">
    <source>
        <dbReference type="PDB" id="1YDO"/>
    </source>
</evidence>
<proteinExistence type="evidence at protein level"/>
<organism>
    <name type="scientific">Bacillus subtilis (strain 168)</name>
    <dbReference type="NCBI Taxonomy" id="224308"/>
    <lineage>
        <taxon>Bacteria</taxon>
        <taxon>Bacillati</taxon>
        <taxon>Bacillota</taxon>
        <taxon>Bacilli</taxon>
        <taxon>Bacillales</taxon>
        <taxon>Bacillaceae</taxon>
        <taxon>Bacillus</taxon>
    </lineage>
</organism>
<feature type="chain" id="PRO_0000360168" description="Hydroxymethylglutaryl-CoA lyase YngG">
    <location>
        <begin position="1"/>
        <end position="299"/>
    </location>
</feature>
<feature type="domain" description="Pyruvate carboxyltransferase" evidence="2">
    <location>
        <begin position="7"/>
        <end position="274"/>
    </location>
</feature>
<feature type="active site" evidence="4">
    <location>
        <position position="240"/>
    </location>
</feature>
<feature type="binding site" evidence="1">
    <location>
        <position position="15"/>
    </location>
    <ligand>
        <name>substrate</name>
    </ligand>
</feature>
<feature type="binding site" evidence="4">
    <location>
        <position position="16"/>
    </location>
    <ligand>
        <name>a divalent metal cation</name>
        <dbReference type="ChEBI" id="CHEBI:60240"/>
    </ligand>
</feature>
<feature type="binding site" evidence="4">
    <location>
        <position position="207"/>
    </location>
    <ligand>
        <name>a divalent metal cation</name>
        <dbReference type="ChEBI" id="CHEBI:60240"/>
    </ligand>
</feature>
<feature type="binding site" evidence="4">
    <location>
        <position position="209"/>
    </location>
    <ligand>
        <name>a divalent metal cation</name>
        <dbReference type="ChEBI" id="CHEBI:60240"/>
    </ligand>
</feature>
<feature type="binding site" evidence="4">
    <location>
        <position position="249"/>
    </location>
    <ligand>
        <name>a divalent metal cation</name>
        <dbReference type="ChEBI" id="CHEBI:60240"/>
    </ligand>
</feature>
<feature type="strand" evidence="5">
    <location>
        <begin position="8"/>
        <end position="11"/>
    </location>
</feature>
<feature type="helix" evidence="5">
    <location>
        <begin position="13"/>
        <end position="16"/>
    </location>
</feature>
<feature type="helix" evidence="5">
    <location>
        <begin position="18"/>
        <end position="20"/>
    </location>
</feature>
<feature type="strand" evidence="5">
    <location>
        <begin position="21"/>
        <end position="23"/>
    </location>
</feature>
<feature type="helix" evidence="5">
    <location>
        <begin position="27"/>
        <end position="38"/>
    </location>
</feature>
<feature type="turn" evidence="5">
    <location>
        <begin position="39"/>
        <end position="41"/>
    </location>
</feature>
<feature type="strand" evidence="5">
    <location>
        <begin position="43"/>
        <end position="49"/>
    </location>
</feature>
<feature type="turn" evidence="5">
    <location>
        <begin position="53"/>
        <end position="55"/>
    </location>
</feature>
<feature type="helix" evidence="5">
    <location>
        <begin position="57"/>
        <end position="59"/>
    </location>
</feature>
<feature type="helix" evidence="5">
    <location>
        <begin position="62"/>
        <end position="68"/>
    </location>
</feature>
<feature type="strand" evidence="5">
    <location>
        <begin position="76"/>
        <end position="80"/>
    </location>
</feature>
<feature type="helix" evidence="5">
    <location>
        <begin position="84"/>
        <end position="93"/>
    </location>
</feature>
<feature type="strand" evidence="5">
    <location>
        <begin position="96"/>
        <end position="105"/>
    </location>
</feature>
<feature type="helix" evidence="5">
    <location>
        <begin position="106"/>
        <end position="110"/>
    </location>
</feature>
<feature type="helix" evidence="5">
    <location>
        <begin position="117"/>
        <end position="133"/>
    </location>
</feature>
<feature type="strand" evidence="5">
    <location>
        <begin position="137"/>
        <end position="143"/>
    </location>
</feature>
<feature type="turn" evidence="5">
    <location>
        <begin position="149"/>
        <end position="151"/>
    </location>
</feature>
<feature type="helix" evidence="5">
    <location>
        <begin position="156"/>
        <end position="169"/>
    </location>
</feature>
<feature type="strand" evidence="5">
    <location>
        <begin position="174"/>
        <end position="177"/>
    </location>
</feature>
<feature type="helix" evidence="5">
    <location>
        <begin position="185"/>
        <end position="196"/>
    </location>
</feature>
<feature type="helix" evidence="5">
    <location>
        <begin position="201"/>
        <end position="203"/>
    </location>
</feature>
<feature type="strand" evidence="5">
    <location>
        <begin position="204"/>
        <end position="207"/>
    </location>
</feature>
<feature type="helix" evidence="5">
    <location>
        <begin position="210"/>
        <end position="212"/>
    </location>
</feature>
<feature type="helix" evidence="5">
    <location>
        <begin position="215"/>
        <end position="225"/>
    </location>
</feature>
<feature type="strand" evidence="5">
    <location>
        <begin position="229"/>
        <end position="233"/>
    </location>
</feature>
<feature type="helix" evidence="5">
    <location>
        <begin position="234"/>
        <end position="236"/>
    </location>
</feature>
<feature type="strand" evidence="5">
    <location>
        <begin position="243"/>
        <end position="247"/>
    </location>
</feature>
<feature type="helix" evidence="5">
    <location>
        <begin position="252"/>
        <end position="261"/>
    </location>
</feature>
<feature type="helix" evidence="5">
    <location>
        <begin position="270"/>
        <end position="284"/>
    </location>
</feature>
<feature type="helix" evidence="5">
    <location>
        <begin position="291"/>
        <end position="296"/>
    </location>
</feature>
<accession>O34873</accession>
<accession>Q799L7</accession>
<gene>
    <name type="primary">yngG</name>
    <name type="ordered locus">BSU18230</name>
</gene>
<protein>
    <recommendedName>
        <fullName>Hydroxymethylglutaryl-CoA lyase YngG</fullName>
        <shortName>HL</shortName>
        <shortName>HMG-CoA lyase</shortName>
        <ecNumber>4.1.3.4</ecNumber>
    </recommendedName>
    <alternativeName>
        <fullName>3-hydroxy-3-methylglutarate-CoA lyase</fullName>
    </alternativeName>
</protein>
<comment type="function">
    <text evidence="4">Involved in the catabolism of branched amino acids such as leucine.</text>
</comment>
<comment type="catalytic activity">
    <reaction>
        <text>(3S)-3-hydroxy-3-methylglutaryl-CoA = acetoacetate + acetyl-CoA</text>
        <dbReference type="Rhea" id="RHEA:24404"/>
        <dbReference type="ChEBI" id="CHEBI:13705"/>
        <dbReference type="ChEBI" id="CHEBI:43074"/>
        <dbReference type="ChEBI" id="CHEBI:57288"/>
        <dbReference type="EC" id="4.1.3.4"/>
    </reaction>
</comment>
<comment type="pathway">
    <text>Metabolic intermediate metabolism; (S)-3-hydroxy-3-methylglutaryl-CoA degradation; acetoacetate from (S)-3-hydroxy-3-methylglutaryl-CoA: step 1/1.</text>
</comment>
<comment type="subunit">
    <text evidence="3">Homodimer and homotetramer.</text>
</comment>
<comment type="similarity">
    <text evidence="4">Belongs to the HMG-CoA lyase family.</text>
</comment>